<organism>
    <name type="scientific">Streptococcus pneumoniae (strain ATCC 700669 / Spain 23F-1)</name>
    <dbReference type="NCBI Taxonomy" id="561276"/>
    <lineage>
        <taxon>Bacteria</taxon>
        <taxon>Bacillati</taxon>
        <taxon>Bacillota</taxon>
        <taxon>Bacilli</taxon>
        <taxon>Lactobacillales</taxon>
        <taxon>Streptococcaceae</taxon>
        <taxon>Streptococcus</taxon>
    </lineage>
</organism>
<accession>B8ZLU4</accession>
<protein>
    <recommendedName>
        <fullName evidence="1">Global transcriptional regulator CodY</fullName>
    </recommendedName>
</protein>
<feature type="chain" id="PRO_1000147210" description="Global transcriptional regulator CodY">
    <location>
        <begin position="1"/>
        <end position="262"/>
    </location>
</feature>
<feature type="DNA-binding region" description="H-T-H motif" evidence="1">
    <location>
        <begin position="207"/>
        <end position="226"/>
    </location>
</feature>
<feature type="region of interest" description="GAF domain" evidence="1">
    <location>
        <begin position="1"/>
        <end position="159"/>
    </location>
</feature>
<name>CODY_STRPJ</name>
<dbReference type="EMBL" id="FM211187">
    <property type="protein sequence ID" value="CAR69377.1"/>
    <property type="molecule type" value="Genomic_DNA"/>
</dbReference>
<dbReference type="RefSeq" id="WP_000940733.1">
    <property type="nucleotide sequence ID" value="NC_011900.1"/>
</dbReference>
<dbReference type="SMR" id="B8ZLU4"/>
<dbReference type="GeneID" id="45653181"/>
<dbReference type="KEGG" id="sne:SPN23F16000"/>
<dbReference type="HOGENOM" id="CLU_089581_0_0_9"/>
<dbReference type="GO" id="GO:0005737">
    <property type="term" value="C:cytoplasm"/>
    <property type="evidence" value="ECO:0007669"/>
    <property type="project" value="UniProtKB-SubCell"/>
</dbReference>
<dbReference type="GO" id="GO:0003677">
    <property type="term" value="F:DNA binding"/>
    <property type="evidence" value="ECO:0007669"/>
    <property type="project" value="UniProtKB-UniRule"/>
</dbReference>
<dbReference type="GO" id="GO:0003700">
    <property type="term" value="F:DNA-binding transcription factor activity"/>
    <property type="evidence" value="ECO:0007669"/>
    <property type="project" value="InterPro"/>
</dbReference>
<dbReference type="GO" id="GO:0005525">
    <property type="term" value="F:GTP binding"/>
    <property type="evidence" value="ECO:0007669"/>
    <property type="project" value="InterPro"/>
</dbReference>
<dbReference type="GO" id="GO:0045892">
    <property type="term" value="P:negative regulation of DNA-templated transcription"/>
    <property type="evidence" value="ECO:0007669"/>
    <property type="project" value="UniProtKB-UniRule"/>
</dbReference>
<dbReference type="CDD" id="cd00090">
    <property type="entry name" value="HTH_ARSR"/>
    <property type="match status" value="1"/>
</dbReference>
<dbReference type="FunFam" id="1.10.10.10:FF:000034">
    <property type="entry name" value="GTP-sensing transcriptional pleiotropic repressor CodY"/>
    <property type="match status" value="1"/>
</dbReference>
<dbReference type="FunFam" id="3.30.450.40:FF:000003">
    <property type="entry name" value="GTP-sensing transcriptional pleiotropic repressor CodY"/>
    <property type="match status" value="1"/>
</dbReference>
<dbReference type="Gene3D" id="3.30.450.40">
    <property type="match status" value="1"/>
</dbReference>
<dbReference type="Gene3D" id="1.10.10.10">
    <property type="entry name" value="Winged helix-like DNA-binding domain superfamily/Winged helix DNA-binding domain"/>
    <property type="match status" value="1"/>
</dbReference>
<dbReference type="HAMAP" id="MF_00621">
    <property type="entry name" value="HTH_type_CodY"/>
    <property type="match status" value="1"/>
</dbReference>
<dbReference type="InterPro" id="IPR011991">
    <property type="entry name" value="ArsR-like_HTH"/>
</dbReference>
<dbReference type="InterPro" id="IPR014154">
    <property type="entry name" value="CodY"/>
</dbReference>
<dbReference type="InterPro" id="IPR029016">
    <property type="entry name" value="GAF-like_dom_sf"/>
</dbReference>
<dbReference type="InterPro" id="IPR013198">
    <property type="entry name" value="GTP_trans_reg_CodY_C"/>
</dbReference>
<dbReference type="InterPro" id="IPR010312">
    <property type="entry name" value="Transc_reg_CodY_N"/>
</dbReference>
<dbReference type="InterPro" id="IPR036388">
    <property type="entry name" value="WH-like_DNA-bd_sf"/>
</dbReference>
<dbReference type="InterPro" id="IPR036390">
    <property type="entry name" value="WH_DNA-bd_sf"/>
</dbReference>
<dbReference type="NCBIfam" id="TIGR02787">
    <property type="entry name" value="codY_Gpos"/>
    <property type="match status" value="1"/>
</dbReference>
<dbReference type="NCBIfam" id="NF003170">
    <property type="entry name" value="PRK04158.1"/>
    <property type="match status" value="1"/>
</dbReference>
<dbReference type="PANTHER" id="PTHR40062:SF1">
    <property type="entry name" value="GLOBAL TRANSCRIPTIONAL REGULATOR CODY"/>
    <property type="match status" value="1"/>
</dbReference>
<dbReference type="PANTHER" id="PTHR40062">
    <property type="entry name" value="GTP-SENSING TRANSCRIPTIONAL PLEIOTROPIC REPRESSOR CODY"/>
    <property type="match status" value="1"/>
</dbReference>
<dbReference type="Pfam" id="PF06018">
    <property type="entry name" value="CodY"/>
    <property type="match status" value="1"/>
</dbReference>
<dbReference type="Pfam" id="PF08222">
    <property type="entry name" value="HTH_CodY"/>
    <property type="match status" value="1"/>
</dbReference>
<dbReference type="PIRSF" id="PIRSF011572">
    <property type="entry name" value="GTP_sensing_CodY"/>
    <property type="match status" value="1"/>
</dbReference>
<dbReference type="SUPFAM" id="SSF46785">
    <property type="entry name" value="Winged helix' DNA-binding domain"/>
    <property type="match status" value="1"/>
</dbReference>
<reference key="1">
    <citation type="journal article" date="2009" name="J. Bacteriol.">
        <title>Role of conjugative elements in the evolution of the multidrug-resistant pandemic clone Streptococcus pneumoniae Spain23F ST81.</title>
        <authorList>
            <person name="Croucher N.J."/>
            <person name="Walker D."/>
            <person name="Romero P."/>
            <person name="Lennard N."/>
            <person name="Paterson G.K."/>
            <person name="Bason N.C."/>
            <person name="Mitchell A.M."/>
            <person name="Quail M.A."/>
            <person name="Andrew P.W."/>
            <person name="Parkhill J."/>
            <person name="Bentley S.D."/>
            <person name="Mitchell T.J."/>
        </authorList>
    </citation>
    <scope>NUCLEOTIDE SEQUENCE [LARGE SCALE GENOMIC DNA]</scope>
    <source>
        <strain>ATCC 700669 / Spain 23F-1</strain>
    </source>
</reference>
<proteinExistence type="inferred from homology"/>
<comment type="function">
    <text evidence="1">DNA-binding global transcriptional regulator which is involved in the adaptive response to starvation and acts by directly or indirectly controlling the expression of numerous genes in response to nutrient availability. During rapid exponential growth, CodY is highly active and represses genes whose products allow adaptation to nutrient depletion.</text>
</comment>
<comment type="subcellular location">
    <subcellularLocation>
        <location evidence="1">Cytoplasm</location>
    </subcellularLocation>
</comment>
<comment type="similarity">
    <text evidence="1">Belongs to the CodY family.</text>
</comment>
<gene>
    <name evidence="1" type="primary">codY</name>
    <name type="ordered locus">SPN23F16000</name>
</gene>
<evidence type="ECO:0000255" key="1">
    <source>
        <dbReference type="HAMAP-Rule" id="MF_00621"/>
    </source>
</evidence>
<keyword id="KW-0963">Cytoplasm</keyword>
<keyword id="KW-0238">DNA-binding</keyword>
<keyword id="KW-0678">Repressor</keyword>
<keyword id="KW-0804">Transcription</keyword>
<keyword id="KW-0805">Transcription regulation</keyword>
<sequence length="262" mass="29756">MAHLLEKTRKITSILKRSEEQLQDELPYNAITRQLADIIHCNACIINSKGRLLGYFMRYKTNTDRVEQFFQTKIFPDDYVQGANMIYETEANLPVEHDMSIFPVESRDDFPDGLTTIAPIHVSGIRLGSLIIWRNDKKFEDEDLVLVEIASTVVGIQLLNFQREEDEKNIRRRTAVTMAVNTLSYSELRAVSAILGELNGNEGKLTASVIADRIGITRSVIVNALRKLESAGIIESRSLGMKGTYLKVLISDIFEEVKKRDY</sequence>